<gene>
    <name evidence="1" type="primary">rplN</name>
    <name type="ordered locus">mlr0305</name>
</gene>
<evidence type="ECO:0000255" key="1">
    <source>
        <dbReference type="HAMAP-Rule" id="MF_01367"/>
    </source>
</evidence>
<evidence type="ECO:0000305" key="2"/>
<sequence length="122" mass="13432">MIQMQTNLDVADNSGARRVMCIKVLGGSKRKYASVGDIIVVSIKEAIPRGRVKKGDVMKAVVVRTAKDIRRPDGSVIRFDKNAAVLVDNKKEPIGTRIFGPVPRELRAKNHMKIISLAPEVL</sequence>
<comment type="function">
    <text evidence="1">Binds to 23S rRNA. Forms part of two intersubunit bridges in the 70S ribosome.</text>
</comment>
<comment type="subunit">
    <text evidence="1">Part of the 50S ribosomal subunit. Forms a cluster with proteins L3 and L19. In the 70S ribosome, L14 and L19 interact and together make contacts with the 16S rRNA in bridges B5 and B8.</text>
</comment>
<comment type="similarity">
    <text evidence="1">Belongs to the universal ribosomal protein uL14 family.</text>
</comment>
<dbReference type="EMBL" id="BA000012">
    <property type="protein sequence ID" value="BAB47916.1"/>
    <property type="molecule type" value="Genomic_DNA"/>
</dbReference>
<dbReference type="RefSeq" id="WP_006205457.1">
    <property type="nucleotide sequence ID" value="NC_002678.2"/>
</dbReference>
<dbReference type="SMR" id="Q98N47"/>
<dbReference type="GeneID" id="91561410"/>
<dbReference type="KEGG" id="mlo:mlr0305"/>
<dbReference type="eggNOG" id="COG0093">
    <property type="taxonomic scope" value="Bacteria"/>
</dbReference>
<dbReference type="HOGENOM" id="CLU_095071_2_1_5"/>
<dbReference type="Proteomes" id="UP000000552">
    <property type="component" value="Chromosome"/>
</dbReference>
<dbReference type="GO" id="GO:0022625">
    <property type="term" value="C:cytosolic large ribosomal subunit"/>
    <property type="evidence" value="ECO:0007669"/>
    <property type="project" value="TreeGrafter"/>
</dbReference>
<dbReference type="GO" id="GO:0070180">
    <property type="term" value="F:large ribosomal subunit rRNA binding"/>
    <property type="evidence" value="ECO:0007669"/>
    <property type="project" value="TreeGrafter"/>
</dbReference>
<dbReference type="GO" id="GO:0003735">
    <property type="term" value="F:structural constituent of ribosome"/>
    <property type="evidence" value="ECO:0007669"/>
    <property type="project" value="InterPro"/>
</dbReference>
<dbReference type="GO" id="GO:0006412">
    <property type="term" value="P:translation"/>
    <property type="evidence" value="ECO:0007669"/>
    <property type="project" value="UniProtKB-UniRule"/>
</dbReference>
<dbReference type="CDD" id="cd00337">
    <property type="entry name" value="Ribosomal_uL14"/>
    <property type="match status" value="1"/>
</dbReference>
<dbReference type="FunFam" id="2.40.150.20:FF:000001">
    <property type="entry name" value="50S ribosomal protein L14"/>
    <property type="match status" value="1"/>
</dbReference>
<dbReference type="Gene3D" id="2.40.150.20">
    <property type="entry name" value="Ribosomal protein L14"/>
    <property type="match status" value="1"/>
</dbReference>
<dbReference type="HAMAP" id="MF_01367">
    <property type="entry name" value="Ribosomal_uL14"/>
    <property type="match status" value="1"/>
</dbReference>
<dbReference type="InterPro" id="IPR000218">
    <property type="entry name" value="Ribosomal_uL14"/>
</dbReference>
<dbReference type="InterPro" id="IPR005745">
    <property type="entry name" value="Ribosomal_uL14_bac-type"/>
</dbReference>
<dbReference type="InterPro" id="IPR019972">
    <property type="entry name" value="Ribosomal_uL14_CS"/>
</dbReference>
<dbReference type="InterPro" id="IPR036853">
    <property type="entry name" value="Ribosomal_uL14_sf"/>
</dbReference>
<dbReference type="NCBIfam" id="TIGR01067">
    <property type="entry name" value="rplN_bact"/>
    <property type="match status" value="1"/>
</dbReference>
<dbReference type="PANTHER" id="PTHR11761">
    <property type="entry name" value="50S/60S RIBOSOMAL PROTEIN L14/L23"/>
    <property type="match status" value="1"/>
</dbReference>
<dbReference type="PANTHER" id="PTHR11761:SF3">
    <property type="entry name" value="LARGE RIBOSOMAL SUBUNIT PROTEIN UL14M"/>
    <property type="match status" value="1"/>
</dbReference>
<dbReference type="Pfam" id="PF00238">
    <property type="entry name" value="Ribosomal_L14"/>
    <property type="match status" value="1"/>
</dbReference>
<dbReference type="SMART" id="SM01374">
    <property type="entry name" value="Ribosomal_L14"/>
    <property type="match status" value="1"/>
</dbReference>
<dbReference type="SUPFAM" id="SSF50193">
    <property type="entry name" value="Ribosomal protein L14"/>
    <property type="match status" value="1"/>
</dbReference>
<dbReference type="PROSITE" id="PS00049">
    <property type="entry name" value="RIBOSOMAL_L14"/>
    <property type="match status" value="1"/>
</dbReference>
<organism>
    <name type="scientific">Mesorhizobium japonicum (strain LMG 29417 / CECT 9101 / MAFF 303099)</name>
    <name type="common">Mesorhizobium loti (strain MAFF 303099)</name>
    <dbReference type="NCBI Taxonomy" id="266835"/>
    <lineage>
        <taxon>Bacteria</taxon>
        <taxon>Pseudomonadati</taxon>
        <taxon>Pseudomonadota</taxon>
        <taxon>Alphaproteobacteria</taxon>
        <taxon>Hyphomicrobiales</taxon>
        <taxon>Phyllobacteriaceae</taxon>
        <taxon>Mesorhizobium</taxon>
    </lineage>
</organism>
<proteinExistence type="inferred from homology"/>
<name>RL14_RHILO</name>
<protein>
    <recommendedName>
        <fullName evidence="1">Large ribosomal subunit protein uL14</fullName>
    </recommendedName>
    <alternativeName>
        <fullName evidence="2">50S ribosomal protein L14</fullName>
    </alternativeName>
</protein>
<reference key="1">
    <citation type="journal article" date="2000" name="DNA Res.">
        <title>Complete genome structure of the nitrogen-fixing symbiotic bacterium Mesorhizobium loti.</title>
        <authorList>
            <person name="Kaneko T."/>
            <person name="Nakamura Y."/>
            <person name="Sato S."/>
            <person name="Asamizu E."/>
            <person name="Kato T."/>
            <person name="Sasamoto S."/>
            <person name="Watanabe A."/>
            <person name="Idesawa K."/>
            <person name="Ishikawa A."/>
            <person name="Kawashima K."/>
            <person name="Kimura T."/>
            <person name="Kishida Y."/>
            <person name="Kiyokawa C."/>
            <person name="Kohara M."/>
            <person name="Matsumoto M."/>
            <person name="Matsuno A."/>
            <person name="Mochizuki Y."/>
            <person name="Nakayama S."/>
            <person name="Nakazaki N."/>
            <person name="Shimpo S."/>
            <person name="Sugimoto M."/>
            <person name="Takeuchi C."/>
            <person name="Yamada M."/>
            <person name="Tabata S."/>
        </authorList>
    </citation>
    <scope>NUCLEOTIDE SEQUENCE [LARGE SCALE GENOMIC DNA]</scope>
    <source>
        <strain>LMG 29417 / CECT 9101 / MAFF 303099</strain>
    </source>
</reference>
<keyword id="KW-0687">Ribonucleoprotein</keyword>
<keyword id="KW-0689">Ribosomal protein</keyword>
<keyword id="KW-0694">RNA-binding</keyword>
<keyword id="KW-0699">rRNA-binding</keyword>
<accession>Q98N47</accession>
<feature type="chain" id="PRO_0000266539" description="Large ribosomal subunit protein uL14">
    <location>
        <begin position="1"/>
        <end position="122"/>
    </location>
</feature>